<organism>
    <name type="scientific">Apomastus schlingeri</name>
    <name type="common">Trap-door spider</name>
    <name type="synonym">Aptostichus schlingeri</name>
    <dbReference type="NCBI Taxonomy" id="12944"/>
    <lineage>
        <taxon>Eukaryota</taxon>
        <taxon>Metazoa</taxon>
        <taxon>Ecdysozoa</taxon>
        <taxon>Arthropoda</taxon>
        <taxon>Chelicerata</taxon>
        <taxon>Arachnida</taxon>
        <taxon>Araneae</taxon>
        <taxon>Mygalomorphae</taxon>
        <taxon>Euctenizidae</taxon>
        <taxon>Apomastus</taxon>
    </lineage>
</organism>
<accession>P49272</accession>
<feature type="chain" id="PRO_0000087666" description="U1-cyrtautoxin-As1d">
    <location>
        <begin position="1"/>
        <end position="76"/>
    </location>
</feature>
<feature type="disulfide bond" evidence="1">
    <location>
        <begin position="23"/>
        <end position="37"/>
    </location>
</feature>
<feature type="disulfide bond" evidence="1">
    <location>
        <begin position="30"/>
        <end position="51"/>
    </location>
</feature>
<feature type="disulfide bond" evidence="1">
    <location>
        <begin position="36"/>
        <end position="66"/>
    </location>
</feature>
<feature type="disulfide bond" evidence="1">
    <location>
        <begin position="69"/>
        <end position="76"/>
    </location>
</feature>
<proteinExistence type="evidence at protein level"/>
<sequence>EIPQNLGSDIPHDIIKLPNGQWCKTPGALCSSRSECCKAKHSDSVTYSSGCSRQWSDQQGLFINQCRTCNVESSMC</sequence>
<keyword id="KW-0903">Direct protein sequencing</keyword>
<keyword id="KW-1015">Disulfide bond</keyword>
<keyword id="KW-0872">Ion channel impairing toxin</keyword>
<keyword id="KW-0960">Knottin</keyword>
<keyword id="KW-0528">Neurotoxin</keyword>
<keyword id="KW-0964">Secreted</keyword>
<keyword id="KW-0800">Toxin</keyword>
<evidence type="ECO:0000250" key="1">
    <source>
        <dbReference type="UniProtKB" id="A0A452CSQ9"/>
    </source>
</evidence>
<evidence type="ECO:0000269" key="2">
    <source>
    </source>
</evidence>
<evidence type="ECO:0000305" key="3"/>
<evidence type="ECO:0000305" key="4">
    <source>
    </source>
</evidence>
<name>TX219_APOSC</name>
<reference key="1">
    <citation type="journal article" date="1992" name="Toxicon">
        <title>Identification of insecticidal peptides from venom of the trap-door spider, Aptostichus schlingeri (Ctenizidae).</title>
        <authorList>
            <person name="Skinner W.S."/>
            <person name="Dennis P.A."/>
            <person name="Li J.P."/>
            <person name="Quistad G.B."/>
        </authorList>
    </citation>
    <scope>PROTEIN SEQUENCE</scope>
    <scope>FUNCTION</scope>
    <scope>TOXIC DOSE</scope>
    <scope>SUBCELLULAR LOCATION</scope>
    <scope>BIOASSAY</scope>
    <source>
        <tissue>Venom</tissue>
    </source>
</reference>
<comment type="function">
    <text evidence="2">Neurotoxin with probable ion channel impairing activity. In vivo, is both paralytic and lethal, when injected into lepidopteran larvae.</text>
</comment>
<comment type="subcellular location">
    <subcellularLocation>
        <location evidence="2">Secreted</location>
    </subcellularLocation>
</comment>
<comment type="tissue specificity">
    <text evidence="4">Expressed by the venom gland.</text>
</comment>
<comment type="domain">
    <text evidence="1">The presence of a 'disulfide through disulfide knot' structurally defines this protein as a knottin.</text>
</comment>
<comment type="toxic dose">
    <text evidence="2">LD(50) is 0.06 mg/kg by subcutaneous injection.</text>
</comment>
<comment type="similarity">
    <text evidence="3">Belongs to the neurotoxin 21 family.</text>
</comment>
<dbReference type="PIR" id="A44007">
    <property type="entry name" value="A44007"/>
</dbReference>
<dbReference type="SMR" id="P49272"/>
<dbReference type="ArachnoServer" id="AS000410">
    <property type="toxin name" value="U1-cyrtautoxin-As1d"/>
</dbReference>
<dbReference type="GO" id="GO:0005576">
    <property type="term" value="C:extracellular region"/>
    <property type="evidence" value="ECO:0007669"/>
    <property type="project" value="UniProtKB-SubCell"/>
</dbReference>
<dbReference type="GO" id="GO:0099106">
    <property type="term" value="F:ion channel regulator activity"/>
    <property type="evidence" value="ECO:0007669"/>
    <property type="project" value="UniProtKB-KW"/>
</dbReference>
<dbReference type="GO" id="GO:0090729">
    <property type="term" value="F:toxin activity"/>
    <property type="evidence" value="ECO:0007669"/>
    <property type="project" value="UniProtKB-KW"/>
</dbReference>
<dbReference type="InterPro" id="IPR035311">
    <property type="entry name" value="Cys_Knot_tox"/>
</dbReference>
<dbReference type="Pfam" id="PF17486">
    <property type="entry name" value="Cys_Knot_tox"/>
    <property type="match status" value="1"/>
</dbReference>
<protein>
    <recommendedName>
        <fullName>U1-cyrtautoxin-As1d</fullName>
        <shortName>U1-CUTX-As1d</shortName>
    </recommendedName>
    <alternativeName>
        <fullName>Aptotoxin IX</fullName>
    </alternativeName>
    <alternativeName>
        <fullName>Aptotoxin-9</fullName>
    </alternativeName>
    <alternativeName>
        <fullName>Paralytic peptide IX</fullName>
        <shortName>PP IX</shortName>
    </alternativeName>
</protein>